<evidence type="ECO:0000255" key="1">
    <source>
        <dbReference type="HAMAP-Rule" id="MF_00624"/>
    </source>
</evidence>
<dbReference type="EC" id="2.7.7.27" evidence="1"/>
<dbReference type="EMBL" id="CP000903">
    <property type="protein sequence ID" value="ABY45862.1"/>
    <property type="molecule type" value="Genomic_DNA"/>
</dbReference>
<dbReference type="RefSeq" id="WP_002129671.1">
    <property type="nucleotide sequence ID" value="NC_010184.1"/>
</dbReference>
<dbReference type="SMR" id="A9VM89"/>
<dbReference type="GeneID" id="66265569"/>
<dbReference type="KEGG" id="bwe:BcerKBAB4_4709"/>
<dbReference type="eggNOG" id="COG0448">
    <property type="taxonomic scope" value="Bacteria"/>
</dbReference>
<dbReference type="HOGENOM" id="CLU_029499_14_0_9"/>
<dbReference type="UniPathway" id="UPA00164"/>
<dbReference type="Proteomes" id="UP000002154">
    <property type="component" value="Chromosome"/>
</dbReference>
<dbReference type="GO" id="GO:0005524">
    <property type="term" value="F:ATP binding"/>
    <property type="evidence" value="ECO:0007669"/>
    <property type="project" value="UniProtKB-KW"/>
</dbReference>
<dbReference type="GO" id="GO:0008878">
    <property type="term" value="F:glucose-1-phosphate adenylyltransferase activity"/>
    <property type="evidence" value="ECO:0007669"/>
    <property type="project" value="UniProtKB-UniRule"/>
</dbReference>
<dbReference type="GO" id="GO:0005978">
    <property type="term" value="P:glycogen biosynthetic process"/>
    <property type="evidence" value="ECO:0007669"/>
    <property type="project" value="UniProtKB-UniRule"/>
</dbReference>
<dbReference type="CDD" id="cd02508">
    <property type="entry name" value="ADP_Glucose_PP"/>
    <property type="match status" value="1"/>
</dbReference>
<dbReference type="CDD" id="cd04651">
    <property type="entry name" value="LbH_G1P_AT_C"/>
    <property type="match status" value="1"/>
</dbReference>
<dbReference type="FunFam" id="2.160.10.10:FF:000022">
    <property type="entry name" value="Glucose-1-phosphate adenylyltransferase"/>
    <property type="match status" value="1"/>
</dbReference>
<dbReference type="FunFam" id="3.90.550.10:FF:000083">
    <property type="entry name" value="Glucose-1-phosphate adenylyltransferase"/>
    <property type="match status" value="1"/>
</dbReference>
<dbReference type="Gene3D" id="2.160.10.10">
    <property type="entry name" value="Hexapeptide repeat proteins"/>
    <property type="match status" value="1"/>
</dbReference>
<dbReference type="Gene3D" id="3.90.550.10">
    <property type="entry name" value="Spore Coat Polysaccharide Biosynthesis Protein SpsA, Chain A"/>
    <property type="match status" value="1"/>
</dbReference>
<dbReference type="HAMAP" id="MF_00624">
    <property type="entry name" value="GlgC"/>
    <property type="match status" value="1"/>
</dbReference>
<dbReference type="InterPro" id="IPR011831">
    <property type="entry name" value="ADP-Glc_PPase"/>
</dbReference>
<dbReference type="InterPro" id="IPR005836">
    <property type="entry name" value="ADP_Glu_pyroP_CS"/>
</dbReference>
<dbReference type="InterPro" id="IPR023049">
    <property type="entry name" value="GlgC_bac"/>
</dbReference>
<dbReference type="InterPro" id="IPR056818">
    <property type="entry name" value="GlmU/GlgC-like_hexapep"/>
</dbReference>
<dbReference type="InterPro" id="IPR005835">
    <property type="entry name" value="NTP_transferase_dom"/>
</dbReference>
<dbReference type="InterPro" id="IPR029044">
    <property type="entry name" value="Nucleotide-diphossugar_trans"/>
</dbReference>
<dbReference type="InterPro" id="IPR011004">
    <property type="entry name" value="Trimer_LpxA-like_sf"/>
</dbReference>
<dbReference type="NCBIfam" id="TIGR02091">
    <property type="entry name" value="glgC"/>
    <property type="match status" value="1"/>
</dbReference>
<dbReference type="NCBIfam" id="NF003670">
    <property type="entry name" value="PRK05293.1"/>
    <property type="match status" value="1"/>
</dbReference>
<dbReference type="PANTHER" id="PTHR43523:SF2">
    <property type="entry name" value="GLUCOSE-1-PHOSPHATE ADENYLYLTRANSFERASE"/>
    <property type="match status" value="1"/>
</dbReference>
<dbReference type="PANTHER" id="PTHR43523">
    <property type="entry name" value="GLUCOSE-1-PHOSPHATE ADENYLYLTRANSFERASE-RELATED"/>
    <property type="match status" value="1"/>
</dbReference>
<dbReference type="Pfam" id="PF24894">
    <property type="entry name" value="Hexapep_GlmU"/>
    <property type="match status" value="1"/>
</dbReference>
<dbReference type="Pfam" id="PF00483">
    <property type="entry name" value="NTP_transferase"/>
    <property type="match status" value="1"/>
</dbReference>
<dbReference type="SUPFAM" id="SSF53448">
    <property type="entry name" value="Nucleotide-diphospho-sugar transferases"/>
    <property type="match status" value="1"/>
</dbReference>
<dbReference type="SUPFAM" id="SSF51161">
    <property type="entry name" value="Trimeric LpxA-like enzymes"/>
    <property type="match status" value="1"/>
</dbReference>
<dbReference type="PROSITE" id="PS00808">
    <property type="entry name" value="ADP_GLC_PYROPHOSPH_1"/>
    <property type="match status" value="1"/>
</dbReference>
<dbReference type="PROSITE" id="PS00809">
    <property type="entry name" value="ADP_GLC_PYROPHOSPH_2"/>
    <property type="match status" value="1"/>
</dbReference>
<keyword id="KW-0067">ATP-binding</keyword>
<keyword id="KW-0119">Carbohydrate metabolism</keyword>
<keyword id="KW-0320">Glycogen biosynthesis</keyword>
<keyword id="KW-0321">Glycogen metabolism</keyword>
<keyword id="KW-0547">Nucleotide-binding</keyword>
<keyword id="KW-0548">Nucleotidyltransferase</keyword>
<keyword id="KW-0808">Transferase</keyword>
<sequence>MAQKQKCVAMLLAGGKGSRLSALTKNLAKPAVPFGGKYRIIDFTLSNCANSGIETVGILTQYQPLELHNYIGIGNAWDLDRVNGGVTVLPPYAESSGVKWYTGTASAIYQNLNYLSQYEPEYVLILSGDHIYKMDYSKMLDYHIEKEADVSISVIEVPWDEASRFGIMNTNEEMEVVEFEEKPQFPRSNLASMGIYIFNWAILKEYLEMDARNPESSNDFGKDVLPLLLDEGKKLMAYPFEGYWKDVGTVKSLWEANMDLLRDETSLNLNDRNWRIYSVNPNEPPQYIAEKAKVEESLINEGCVIEGDVKHSVLFQGVTVEEGSMVIDSVVMPGAKIGKNVVIERAIVGSEMVIEDGTIIRPEKNVDDVVLIAEGK</sequence>
<accession>A9VM89</accession>
<name>GLGC_BACMK</name>
<gene>
    <name evidence="1" type="primary">glgC</name>
    <name type="ordered locus">BcerKBAB4_4709</name>
</gene>
<organism>
    <name type="scientific">Bacillus mycoides (strain KBAB4)</name>
    <name type="common">Bacillus weihenstephanensis</name>
    <dbReference type="NCBI Taxonomy" id="315730"/>
    <lineage>
        <taxon>Bacteria</taxon>
        <taxon>Bacillati</taxon>
        <taxon>Bacillota</taxon>
        <taxon>Bacilli</taxon>
        <taxon>Bacillales</taxon>
        <taxon>Bacillaceae</taxon>
        <taxon>Bacillus</taxon>
        <taxon>Bacillus cereus group</taxon>
    </lineage>
</organism>
<protein>
    <recommendedName>
        <fullName evidence="1">Glucose-1-phosphate adenylyltransferase</fullName>
        <ecNumber evidence="1">2.7.7.27</ecNumber>
    </recommendedName>
    <alternativeName>
        <fullName evidence="1">ADP-glucose pyrophosphorylase</fullName>
        <shortName evidence="1">ADPGlc PPase</shortName>
    </alternativeName>
    <alternativeName>
        <fullName evidence="1">ADP-glucose synthase</fullName>
    </alternativeName>
</protein>
<feature type="chain" id="PRO_1000130466" description="Glucose-1-phosphate adenylyltransferase">
    <location>
        <begin position="1"/>
        <end position="376"/>
    </location>
</feature>
<feature type="binding site" evidence="1">
    <location>
        <position position="101"/>
    </location>
    <ligand>
        <name>alpha-D-glucose 1-phosphate</name>
        <dbReference type="ChEBI" id="CHEBI:58601"/>
    </ligand>
</feature>
<feature type="binding site" evidence="1">
    <location>
        <position position="166"/>
    </location>
    <ligand>
        <name>alpha-D-glucose 1-phosphate</name>
        <dbReference type="ChEBI" id="CHEBI:58601"/>
    </ligand>
</feature>
<feature type="binding site" evidence="1">
    <location>
        <begin position="181"/>
        <end position="182"/>
    </location>
    <ligand>
        <name>alpha-D-glucose 1-phosphate</name>
        <dbReference type="ChEBI" id="CHEBI:58601"/>
    </ligand>
</feature>
<feature type="binding site" evidence="1">
    <location>
        <position position="192"/>
    </location>
    <ligand>
        <name>alpha-D-glucose 1-phosphate</name>
        <dbReference type="ChEBI" id="CHEBI:58601"/>
    </ligand>
</feature>
<reference key="1">
    <citation type="journal article" date="2008" name="Chem. Biol. Interact.">
        <title>Extending the Bacillus cereus group genomics to putative food-borne pathogens of different toxicity.</title>
        <authorList>
            <person name="Lapidus A."/>
            <person name="Goltsman E."/>
            <person name="Auger S."/>
            <person name="Galleron N."/>
            <person name="Segurens B."/>
            <person name="Dossat C."/>
            <person name="Land M.L."/>
            <person name="Broussolle V."/>
            <person name="Brillard J."/>
            <person name="Guinebretiere M.-H."/>
            <person name="Sanchis V."/>
            <person name="Nguen-the C."/>
            <person name="Lereclus D."/>
            <person name="Richardson P."/>
            <person name="Wincker P."/>
            <person name="Weissenbach J."/>
            <person name="Ehrlich S.D."/>
            <person name="Sorokin A."/>
        </authorList>
    </citation>
    <scope>NUCLEOTIDE SEQUENCE [LARGE SCALE GENOMIC DNA]</scope>
    <source>
        <strain>KBAB4</strain>
    </source>
</reference>
<proteinExistence type="inferred from homology"/>
<comment type="function">
    <text evidence="1">Involved in the biosynthesis of ADP-glucose, a building block required for the elongation reactions to produce glycogen. Catalyzes the reaction between ATP and alpha-D-glucose 1-phosphate (G1P) to produce pyrophosphate and ADP-Glc.</text>
</comment>
<comment type="catalytic activity">
    <reaction evidence="1">
        <text>alpha-D-glucose 1-phosphate + ATP + H(+) = ADP-alpha-D-glucose + diphosphate</text>
        <dbReference type="Rhea" id="RHEA:12120"/>
        <dbReference type="ChEBI" id="CHEBI:15378"/>
        <dbReference type="ChEBI" id="CHEBI:30616"/>
        <dbReference type="ChEBI" id="CHEBI:33019"/>
        <dbReference type="ChEBI" id="CHEBI:57498"/>
        <dbReference type="ChEBI" id="CHEBI:58601"/>
        <dbReference type="EC" id="2.7.7.27"/>
    </reaction>
</comment>
<comment type="pathway">
    <text evidence="1">Glycan biosynthesis; glycogen biosynthesis.</text>
</comment>
<comment type="subunit">
    <text evidence="1">Homotetramer.</text>
</comment>
<comment type="similarity">
    <text evidence="1">Belongs to the bacterial/plant glucose-1-phosphate adenylyltransferase family.</text>
</comment>